<organism>
    <name type="scientific">Phytoplasma australiense</name>
    <dbReference type="NCBI Taxonomy" id="59748"/>
    <lineage>
        <taxon>Bacteria</taxon>
        <taxon>Bacillati</taxon>
        <taxon>Mycoplasmatota</taxon>
        <taxon>Mollicutes</taxon>
        <taxon>Acholeplasmatales</taxon>
        <taxon>Acholeplasmataceae</taxon>
        <taxon>Candidatus Phytoplasma</taxon>
        <taxon>16SrXII (Stolbur group)</taxon>
    </lineage>
</organism>
<sequence length="124" mass="13534">MAKLTKELFISALKEMSLLEIKELLDGLKEEFGIDPNALAVASAGPSNAPEAEEKTEFTVVMKNFGKNRLPVIKVIREITGLGLLDADKFIKVPDQKVKENVSKALAEDIKAKLEQAGAVIELQ</sequence>
<gene>
    <name evidence="1" type="primary">rplL</name>
    <name type="ordered locus">PA0666</name>
</gene>
<reference key="1">
    <citation type="journal article" date="2008" name="J. Bacteriol.">
        <title>Comparative genome analysis of 'Candidatus Phytoplasma australiense' (subgroup tuf-Australia I; rp-A) and 'Ca. Phytoplasma asteris' strains OY-M and AY-WB.</title>
        <authorList>
            <person name="Tran-Nguyen L.T."/>
            <person name="Kube M."/>
            <person name="Schneider B."/>
            <person name="Reinhardt R."/>
            <person name="Gibb K.S."/>
        </authorList>
    </citation>
    <scope>NUCLEOTIDE SEQUENCE [LARGE SCALE GENOMIC DNA]</scope>
</reference>
<feature type="chain" id="PRO_1000195820" description="Large ribosomal subunit protein bL12">
    <location>
        <begin position="1"/>
        <end position="124"/>
    </location>
</feature>
<accession>B1VAM7</accession>
<dbReference type="EMBL" id="AM422018">
    <property type="protein sequence ID" value="CAM12000.1"/>
    <property type="molecule type" value="Genomic_DNA"/>
</dbReference>
<dbReference type="SMR" id="B1VAM7"/>
<dbReference type="STRING" id="59748.PA0666"/>
<dbReference type="KEGG" id="pal:PA0666"/>
<dbReference type="eggNOG" id="COG0222">
    <property type="taxonomic scope" value="Bacteria"/>
</dbReference>
<dbReference type="Proteomes" id="UP000008323">
    <property type="component" value="Chromosome"/>
</dbReference>
<dbReference type="GO" id="GO:0022625">
    <property type="term" value="C:cytosolic large ribosomal subunit"/>
    <property type="evidence" value="ECO:0007669"/>
    <property type="project" value="TreeGrafter"/>
</dbReference>
<dbReference type="GO" id="GO:0003729">
    <property type="term" value="F:mRNA binding"/>
    <property type="evidence" value="ECO:0007669"/>
    <property type="project" value="TreeGrafter"/>
</dbReference>
<dbReference type="GO" id="GO:0003735">
    <property type="term" value="F:structural constituent of ribosome"/>
    <property type="evidence" value="ECO:0007669"/>
    <property type="project" value="InterPro"/>
</dbReference>
<dbReference type="GO" id="GO:0006412">
    <property type="term" value="P:translation"/>
    <property type="evidence" value="ECO:0007669"/>
    <property type="project" value="UniProtKB-UniRule"/>
</dbReference>
<dbReference type="FunFam" id="3.30.1390.10:FF:000001">
    <property type="entry name" value="50S ribosomal protein L7/L12"/>
    <property type="match status" value="1"/>
</dbReference>
<dbReference type="Gene3D" id="3.30.1390.10">
    <property type="match status" value="1"/>
</dbReference>
<dbReference type="Gene3D" id="1.20.5.710">
    <property type="entry name" value="Single helix bin"/>
    <property type="match status" value="1"/>
</dbReference>
<dbReference type="HAMAP" id="MF_00368">
    <property type="entry name" value="Ribosomal_bL12"/>
    <property type="match status" value="1"/>
</dbReference>
<dbReference type="InterPro" id="IPR000206">
    <property type="entry name" value="Ribosomal_bL12"/>
</dbReference>
<dbReference type="InterPro" id="IPR013823">
    <property type="entry name" value="Ribosomal_bL12_C"/>
</dbReference>
<dbReference type="InterPro" id="IPR014719">
    <property type="entry name" value="Ribosomal_bL12_C/ClpS-like"/>
</dbReference>
<dbReference type="InterPro" id="IPR008932">
    <property type="entry name" value="Ribosomal_bL12_oligo"/>
</dbReference>
<dbReference type="InterPro" id="IPR036235">
    <property type="entry name" value="Ribosomal_bL12_oligo_N_sf"/>
</dbReference>
<dbReference type="NCBIfam" id="TIGR00855">
    <property type="entry name" value="L12"/>
    <property type="match status" value="1"/>
</dbReference>
<dbReference type="PANTHER" id="PTHR45987">
    <property type="entry name" value="39S RIBOSOMAL PROTEIN L12"/>
    <property type="match status" value="1"/>
</dbReference>
<dbReference type="PANTHER" id="PTHR45987:SF4">
    <property type="entry name" value="LARGE RIBOSOMAL SUBUNIT PROTEIN BL12M"/>
    <property type="match status" value="1"/>
</dbReference>
<dbReference type="Pfam" id="PF00542">
    <property type="entry name" value="Ribosomal_L12"/>
    <property type="match status" value="1"/>
</dbReference>
<dbReference type="Pfam" id="PF16320">
    <property type="entry name" value="Ribosomal_L12_N"/>
    <property type="match status" value="1"/>
</dbReference>
<dbReference type="SUPFAM" id="SSF54736">
    <property type="entry name" value="ClpS-like"/>
    <property type="match status" value="1"/>
</dbReference>
<dbReference type="SUPFAM" id="SSF48300">
    <property type="entry name" value="Ribosomal protein L7/12, oligomerisation (N-terminal) domain"/>
    <property type="match status" value="1"/>
</dbReference>
<protein>
    <recommendedName>
        <fullName evidence="1">Large ribosomal subunit protein bL12</fullName>
    </recommendedName>
    <alternativeName>
        <fullName evidence="2">50S ribosomal protein L7/L12</fullName>
    </alternativeName>
</protein>
<comment type="function">
    <text evidence="1">Forms part of the ribosomal stalk which helps the ribosome interact with GTP-bound translation factors. Is thus essential for accurate translation.</text>
</comment>
<comment type="subunit">
    <text evidence="1">Homodimer. Part of the ribosomal stalk of the 50S ribosomal subunit. Forms a multimeric L10(L12)X complex, where L10 forms an elongated spine to which 2 to 4 L12 dimers bind in a sequential fashion. Binds GTP-bound translation factors.</text>
</comment>
<comment type="similarity">
    <text evidence="1">Belongs to the bacterial ribosomal protein bL12 family.</text>
</comment>
<keyword id="KW-1185">Reference proteome</keyword>
<keyword id="KW-0687">Ribonucleoprotein</keyword>
<keyword id="KW-0689">Ribosomal protein</keyword>
<name>RL7_PHYAS</name>
<evidence type="ECO:0000255" key="1">
    <source>
        <dbReference type="HAMAP-Rule" id="MF_00368"/>
    </source>
</evidence>
<evidence type="ECO:0000305" key="2"/>
<proteinExistence type="inferred from homology"/>